<keyword id="KW-0413">Isomerase</keyword>
<keyword id="KW-1185">Reference proteome</keyword>
<keyword id="KW-0819">tRNA processing</keyword>
<gene>
    <name type="ORF">B0024.11</name>
</gene>
<comment type="catalytic activity">
    <reaction>
        <text>a uridine in tRNA = a pseudouridine in tRNA</text>
        <dbReference type="Rhea" id="RHEA:54572"/>
        <dbReference type="Rhea" id="RHEA-COMP:13339"/>
        <dbReference type="Rhea" id="RHEA-COMP:13934"/>
        <dbReference type="ChEBI" id="CHEBI:65314"/>
        <dbReference type="ChEBI" id="CHEBI:65315"/>
    </reaction>
</comment>
<comment type="similarity">
    <text evidence="4">Belongs to the pseudouridine synthase TruD family.</text>
</comment>
<dbReference type="EC" id="5.4.99.-"/>
<dbReference type="EMBL" id="Z71178">
    <property type="protein sequence ID" value="CAA94883.1"/>
    <property type="molecule type" value="Genomic_DNA"/>
</dbReference>
<dbReference type="PIR" id="T18646">
    <property type="entry name" value="T18646"/>
</dbReference>
<dbReference type="RefSeq" id="NP_505653.1">
    <property type="nucleotide sequence ID" value="NM_073252.6"/>
</dbReference>
<dbReference type="SMR" id="Q17426"/>
<dbReference type="BioGRID" id="44466">
    <property type="interactions" value="4"/>
</dbReference>
<dbReference type="FunCoup" id="Q17426">
    <property type="interactions" value="2849"/>
</dbReference>
<dbReference type="IntAct" id="Q17426">
    <property type="interactions" value="2"/>
</dbReference>
<dbReference type="MINT" id="Q17426"/>
<dbReference type="STRING" id="6239.B0024.11.1"/>
<dbReference type="iPTMnet" id="Q17426"/>
<dbReference type="PaxDb" id="6239-B0024.11"/>
<dbReference type="PeptideAtlas" id="Q17426"/>
<dbReference type="EnsemblMetazoa" id="B0024.11.1">
    <property type="protein sequence ID" value="B0024.11.1"/>
    <property type="gene ID" value="WBGene00007101"/>
</dbReference>
<dbReference type="GeneID" id="179436"/>
<dbReference type="KEGG" id="cel:CELE_B0024.11"/>
<dbReference type="UCSC" id="B0024.11">
    <property type="organism name" value="c. elegans"/>
</dbReference>
<dbReference type="AGR" id="WB:WBGene00007101"/>
<dbReference type="CTD" id="179436"/>
<dbReference type="WormBase" id="B0024.11">
    <property type="protein sequence ID" value="CE05155"/>
    <property type="gene ID" value="WBGene00007101"/>
</dbReference>
<dbReference type="eggNOG" id="KOG2339">
    <property type="taxonomic scope" value="Eukaryota"/>
</dbReference>
<dbReference type="GeneTree" id="ENSGT00530000063554"/>
<dbReference type="HOGENOM" id="CLU_005281_0_2_1"/>
<dbReference type="InParanoid" id="Q17426"/>
<dbReference type="OMA" id="WINYFGH"/>
<dbReference type="OrthoDB" id="447290at2759"/>
<dbReference type="PhylomeDB" id="Q17426"/>
<dbReference type="PRO" id="PR:Q17426"/>
<dbReference type="Proteomes" id="UP000001940">
    <property type="component" value="Chromosome V"/>
</dbReference>
<dbReference type="Bgee" id="WBGene00007101">
    <property type="expression patterns" value="Expressed in germ line (C elegans) and 4 other cell types or tissues"/>
</dbReference>
<dbReference type="GO" id="GO:0005634">
    <property type="term" value="C:nucleus"/>
    <property type="evidence" value="ECO:0000318"/>
    <property type="project" value="GO_Central"/>
</dbReference>
<dbReference type="GO" id="GO:0009982">
    <property type="term" value="F:pseudouridine synthase activity"/>
    <property type="evidence" value="ECO:0000318"/>
    <property type="project" value="GO_Central"/>
</dbReference>
<dbReference type="GO" id="GO:0003723">
    <property type="term" value="F:RNA binding"/>
    <property type="evidence" value="ECO:0007669"/>
    <property type="project" value="InterPro"/>
</dbReference>
<dbReference type="GO" id="GO:0106029">
    <property type="term" value="F:tRNA pseudouridine synthase activity"/>
    <property type="evidence" value="ECO:0007669"/>
    <property type="project" value="RHEA"/>
</dbReference>
<dbReference type="GO" id="GO:0001522">
    <property type="term" value="P:pseudouridine synthesis"/>
    <property type="evidence" value="ECO:0000318"/>
    <property type="project" value="GO_Central"/>
</dbReference>
<dbReference type="GO" id="GO:0008033">
    <property type="term" value="P:tRNA processing"/>
    <property type="evidence" value="ECO:0007669"/>
    <property type="project" value="UniProtKB-KW"/>
</dbReference>
<dbReference type="CDD" id="cd02576">
    <property type="entry name" value="PseudoU_synth_ScPUS7"/>
    <property type="match status" value="1"/>
</dbReference>
<dbReference type="FunFam" id="3.30.2350.20:FF:000017">
    <property type="entry name" value="Putative pseudouridine synthase B0024.11"/>
    <property type="match status" value="1"/>
</dbReference>
<dbReference type="FunFam" id="3.30.2350.20:FF:000030">
    <property type="entry name" value="tRNA pseudouridine synthase D"/>
    <property type="match status" value="1"/>
</dbReference>
<dbReference type="Gene3D" id="3.30.2350.20">
    <property type="entry name" value="TruD, catalytic domain"/>
    <property type="match status" value="2"/>
</dbReference>
<dbReference type="InterPro" id="IPR020103">
    <property type="entry name" value="PsdUridine_synth_cat_dom_sf"/>
</dbReference>
<dbReference type="InterPro" id="IPR001656">
    <property type="entry name" value="PsdUridine_synth_TruD"/>
</dbReference>
<dbReference type="InterPro" id="IPR020119">
    <property type="entry name" value="PsdUridine_synth_TruD_CS"/>
</dbReference>
<dbReference type="InterPro" id="IPR011760">
    <property type="entry name" value="PsdUridine_synth_TruD_insert"/>
</dbReference>
<dbReference type="InterPro" id="IPR042214">
    <property type="entry name" value="TruD_catalytic"/>
</dbReference>
<dbReference type="NCBIfam" id="TIGR00094">
    <property type="entry name" value="tRNA_TruD_broad"/>
    <property type="match status" value="1"/>
</dbReference>
<dbReference type="PANTHER" id="PTHR13326:SF31">
    <property type="entry name" value="PSEUDOURIDYLATE SYNTHASE 7 HOMOLOG"/>
    <property type="match status" value="1"/>
</dbReference>
<dbReference type="PANTHER" id="PTHR13326">
    <property type="entry name" value="TRNA PSEUDOURIDINE SYNTHASE D"/>
    <property type="match status" value="1"/>
</dbReference>
<dbReference type="Pfam" id="PF01142">
    <property type="entry name" value="TruD"/>
    <property type="match status" value="1"/>
</dbReference>
<dbReference type="PIRSF" id="PIRSF037016">
    <property type="entry name" value="Pseudouridin_synth_euk_prd"/>
    <property type="match status" value="1"/>
</dbReference>
<dbReference type="SUPFAM" id="SSF55120">
    <property type="entry name" value="Pseudouridine synthase"/>
    <property type="match status" value="1"/>
</dbReference>
<dbReference type="PROSITE" id="PS50984">
    <property type="entry name" value="TRUD"/>
    <property type="match status" value="1"/>
</dbReference>
<dbReference type="PROSITE" id="PS01268">
    <property type="entry name" value="UPF0024"/>
    <property type="match status" value="1"/>
</dbReference>
<sequence>METEFGLTEYASEHTITPVPCLLKEMYSDFIVQEILADHTVLAIPSPDVVLESTGSKKEDIEIEECVAKPDCISEETLAALNDRFSTKGDPVLVKVDDLSKEDRKSIHHFIRERYAGVLITETKEDGILVSHGHTKSSRKRKLWDEKVPKECHFTICKENKETSFACQLIAKFLNVGPNNIRTHGIKDKRAVTSQRVSVTKVHERTILDLNSKLRGIRVFGCEYKDDPVQMGAHWGNRFSIVLRSLPDDSEQLLHQRLETFQNTGFINYFGTQRFGSRSSTTAEIGLAIVKRDWEKAVKMIMTNAMPDHLGYGSVGYAAKCFSQTGDARKAFSKLKGAQAFATVEGNILKCLSKGGTWQNCITEAIPIQSRSLYVHAYQSLIWNKVASRRVKEYGTRVHESDVGANGFSLGEHATHYDIHIPLPGENLPFEGSYGAKWISELLEEDGLTQSSFTALKDRFSLGESSRCLFVEAKELKWKFIRYGNARDLLQDGLQTRAIPEAEQKGPLLALQIQFSLISGSYATVALREVTGSDMGKKAMRDASFKTRGDDEKTEENVLEEKGSDDANELNLVSEDQ</sequence>
<name>YQ4B_CAEEL</name>
<accession>Q17426</accession>
<protein>
    <recommendedName>
        <fullName>Putative pseudouridine synthase B0024.11</fullName>
        <ecNumber>5.4.99.-</ecNumber>
    </recommendedName>
</protein>
<feature type="chain" id="PRO_0000152559" description="Putative pseudouridine synthase B0024.11">
    <location>
        <begin position="1"/>
        <end position="577"/>
    </location>
</feature>
<feature type="domain" description="TRUD" evidence="2">
    <location>
        <begin position="265"/>
        <end position="472"/>
    </location>
</feature>
<feature type="region of interest" description="Disordered" evidence="3">
    <location>
        <begin position="538"/>
        <end position="577"/>
    </location>
</feature>
<feature type="compositionally biased region" description="Basic and acidic residues" evidence="3">
    <location>
        <begin position="538"/>
        <end position="565"/>
    </location>
</feature>
<feature type="active site" description="Nucleophile" evidence="1">
    <location>
        <position position="188"/>
    </location>
</feature>
<reference key="1">
    <citation type="journal article" date="1998" name="Science">
        <title>Genome sequence of the nematode C. elegans: a platform for investigating biology.</title>
        <authorList>
            <consortium name="The C. elegans sequencing consortium"/>
        </authorList>
    </citation>
    <scope>NUCLEOTIDE SEQUENCE [LARGE SCALE GENOMIC DNA]</scope>
    <source>
        <strain>Bristol N2</strain>
    </source>
</reference>
<evidence type="ECO:0000250" key="1"/>
<evidence type="ECO:0000255" key="2">
    <source>
        <dbReference type="PROSITE-ProRule" id="PRU00342"/>
    </source>
</evidence>
<evidence type="ECO:0000256" key="3">
    <source>
        <dbReference type="SAM" id="MobiDB-lite"/>
    </source>
</evidence>
<evidence type="ECO:0000305" key="4"/>
<proteinExistence type="inferred from homology"/>
<organism>
    <name type="scientific">Caenorhabditis elegans</name>
    <dbReference type="NCBI Taxonomy" id="6239"/>
    <lineage>
        <taxon>Eukaryota</taxon>
        <taxon>Metazoa</taxon>
        <taxon>Ecdysozoa</taxon>
        <taxon>Nematoda</taxon>
        <taxon>Chromadorea</taxon>
        <taxon>Rhabditida</taxon>
        <taxon>Rhabditina</taxon>
        <taxon>Rhabditomorpha</taxon>
        <taxon>Rhabditoidea</taxon>
        <taxon>Rhabditidae</taxon>
        <taxon>Peloderinae</taxon>
        <taxon>Caenorhabditis</taxon>
    </lineage>
</organism>